<keyword id="KW-0378">Hydrolase</keyword>
<keyword id="KW-0408">Iron</keyword>
<keyword id="KW-0479">Metal-binding</keyword>
<keyword id="KW-0648">Protein biosynthesis</keyword>
<keyword id="KW-1185">Reference proteome</keyword>
<accession>Q0ASK2</accession>
<dbReference type="EC" id="3.5.1.88" evidence="1"/>
<dbReference type="EMBL" id="CP000449">
    <property type="protein sequence ID" value="ABI64735.1"/>
    <property type="molecule type" value="Genomic_DNA"/>
</dbReference>
<dbReference type="RefSeq" id="WP_011642382.1">
    <property type="nucleotide sequence ID" value="NC_008347.1"/>
</dbReference>
<dbReference type="SMR" id="Q0ASK2"/>
<dbReference type="STRING" id="394221.Mmar10_0442"/>
<dbReference type="KEGG" id="mmr:Mmar10_0442"/>
<dbReference type="eggNOG" id="COG0242">
    <property type="taxonomic scope" value="Bacteria"/>
</dbReference>
<dbReference type="HOGENOM" id="CLU_061901_2_0_5"/>
<dbReference type="OrthoDB" id="9804313at2"/>
<dbReference type="Proteomes" id="UP000001964">
    <property type="component" value="Chromosome"/>
</dbReference>
<dbReference type="GO" id="GO:0046872">
    <property type="term" value="F:metal ion binding"/>
    <property type="evidence" value="ECO:0007669"/>
    <property type="project" value="UniProtKB-KW"/>
</dbReference>
<dbReference type="GO" id="GO:0042586">
    <property type="term" value="F:peptide deformylase activity"/>
    <property type="evidence" value="ECO:0007669"/>
    <property type="project" value="UniProtKB-UniRule"/>
</dbReference>
<dbReference type="GO" id="GO:0043686">
    <property type="term" value="P:co-translational protein modification"/>
    <property type="evidence" value="ECO:0007669"/>
    <property type="project" value="TreeGrafter"/>
</dbReference>
<dbReference type="GO" id="GO:0006412">
    <property type="term" value="P:translation"/>
    <property type="evidence" value="ECO:0007669"/>
    <property type="project" value="UniProtKB-UniRule"/>
</dbReference>
<dbReference type="CDD" id="cd00487">
    <property type="entry name" value="Pep_deformylase"/>
    <property type="match status" value="1"/>
</dbReference>
<dbReference type="FunFam" id="3.90.45.10:FF:000005">
    <property type="entry name" value="Peptide deformylase"/>
    <property type="match status" value="1"/>
</dbReference>
<dbReference type="Gene3D" id="3.90.45.10">
    <property type="entry name" value="Peptide deformylase"/>
    <property type="match status" value="1"/>
</dbReference>
<dbReference type="HAMAP" id="MF_00163">
    <property type="entry name" value="Pep_deformylase"/>
    <property type="match status" value="1"/>
</dbReference>
<dbReference type="InterPro" id="IPR023635">
    <property type="entry name" value="Peptide_deformylase"/>
</dbReference>
<dbReference type="InterPro" id="IPR036821">
    <property type="entry name" value="Peptide_deformylase_sf"/>
</dbReference>
<dbReference type="NCBIfam" id="TIGR00079">
    <property type="entry name" value="pept_deformyl"/>
    <property type="match status" value="1"/>
</dbReference>
<dbReference type="NCBIfam" id="NF001159">
    <property type="entry name" value="PRK00150.1-3"/>
    <property type="match status" value="1"/>
</dbReference>
<dbReference type="PANTHER" id="PTHR10458">
    <property type="entry name" value="PEPTIDE DEFORMYLASE"/>
    <property type="match status" value="1"/>
</dbReference>
<dbReference type="PANTHER" id="PTHR10458:SF22">
    <property type="entry name" value="PEPTIDE DEFORMYLASE"/>
    <property type="match status" value="1"/>
</dbReference>
<dbReference type="Pfam" id="PF01327">
    <property type="entry name" value="Pep_deformylase"/>
    <property type="match status" value="1"/>
</dbReference>
<dbReference type="PIRSF" id="PIRSF004749">
    <property type="entry name" value="Pep_def"/>
    <property type="match status" value="1"/>
</dbReference>
<dbReference type="PRINTS" id="PR01576">
    <property type="entry name" value="PDEFORMYLASE"/>
</dbReference>
<dbReference type="SUPFAM" id="SSF56420">
    <property type="entry name" value="Peptide deformylase"/>
    <property type="match status" value="1"/>
</dbReference>
<name>DEF_MARMM</name>
<sequence>MAIREILTVPDPILKEVSQPVDQVDDDLRELMDDMLQTMYAADGIGLAAIQVGVPKRVIVMDLAGSDEEAKPRYFVNPVLSDPSDTLKPYEEGCLSVPTVYDEIERPDRIHIQYLDYDGNECEEIAEGMFAVCIQHEMDHLEGVLFIDYLSRLKRQRAVQKVKKVEKSKDRDAA</sequence>
<evidence type="ECO:0000255" key="1">
    <source>
        <dbReference type="HAMAP-Rule" id="MF_00163"/>
    </source>
</evidence>
<proteinExistence type="inferred from homology"/>
<feature type="chain" id="PRO_0000301054" description="Peptide deformylase">
    <location>
        <begin position="1"/>
        <end position="174"/>
    </location>
</feature>
<feature type="active site" evidence="1">
    <location>
        <position position="137"/>
    </location>
</feature>
<feature type="binding site" evidence="1">
    <location>
        <position position="94"/>
    </location>
    <ligand>
        <name>Fe cation</name>
        <dbReference type="ChEBI" id="CHEBI:24875"/>
    </ligand>
</feature>
<feature type="binding site" evidence="1">
    <location>
        <position position="136"/>
    </location>
    <ligand>
        <name>Fe cation</name>
        <dbReference type="ChEBI" id="CHEBI:24875"/>
    </ligand>
</feature>
<feature type="binding site" evidence="1">
    <location>
        <position position="140"/>
    </location>
    <ligand>
        <name>Fe cation</name>
        <dbReference type="ChEBI" id="CHEBI:24875"/>
    </ligand>
</feature>
<protein>
    <recommendedName>
        <fullName evidence="1">Peptide deformylase</fullName>
        <shortName evidence="1">PDF</shortName>
        <ecNumber evidence="1">3.5.1.88</ecNumber>
    </recommendedName>
    <alternativeName>
        <fullName evidence="1">Polypeptide deformylase</fullName>
    </alternativeName>
</protein>
<comment type="function">
    <text evidence="1">Removes the formyl group from the N-terminal Met of newly synthesized proteins. Requires at least a dipeptide for an efficient rate of reaction. N-terminal L-methionine is a prerequisite for activity but the enzyme has broad specificity at other positions.</text>
</comment>
<comment type="catalytic activity">
    <reaction evidence="1">
        <text>N-terminal N-formyl-L-methionyl-[peptide] + H2O = N-terminal L-methionyl-[peptide] + formate</text>
        <dbReference type="Rhea" id="RHEA:24420"/>
        <dbReference type="Rhea" id="RHEA-COMP:10639"/>
        <dbReference type="Rhea" id="RHEA-COMP:10640"/>
        <dbReference type="ChEBI" id="CHEBI:15377"/>
        <dbReference type="ChEBI" id="CHEBI:15740"/>
        <dbReference type="ChEBI" id="CHEBI:49298"/>
        <dbReference type="ChEBI" id="CHEBI:64731"/>
        <dbReference type="EC" id="3.5.1.88"/>
    </reaction>
</comment>
<comment type="cofactor">
    <cofactor evidence="1">
        <name>Fe(2+)</name>
        <dbReference type="ChEBI" id="CHEBI:29033"/>
    </cofactor>
    <text evidence="1">Binds 1 Fe(2+) ion.</text>
</comment>
<comment type="similarity">
    <text evidence="1">Belongs to the polypeptide deformylase family.</text>
</comment>
<organism>
    <name type="scientific">Maricaulis maris (strain MCS10)</name>
    <name type="common">Caulobacter maris</name>
    <dbReference type="NCBI Taxonomy" id="394221"/>
    <lineage>
        <taxon>Bacteria</taxon>
        <taxon>Pseudomonadati</taxon>
        <taxon>Pseudomonadota</taxon>
        <taxon>Alphaproteobacteria</taxon>
        <taxon>Maricaulales</taxon>
        <taxon>Maricaulaceae</taxon>
        <taxon>Maricaulis</taxon>
    </lineage>
</organism>
<reference key="1">
    <citation type="submission" date="2006-08" db="EMBL/GenBank/DDBJ databases">
        <title>Complete sequence of Maricaulis maris MCS10.</title>
        <authorList>
            <consortium name="US DOE Joint Genome Institute"/>
            <person name="Copeland A."/>
            <person name="Lucas S."/>
            <person name="Lapidus A."/>
            <person name="Barry K."/>
            <person name="Detter J.C."/>
            <person name="Glavina del Rio T."/>
            <person name="Hammon N."/>
            <person name="Israni S."/>
            <person name="Dalin E."/>
            <person name="Tice H."/>
            <person name="Pitluck S."/>
            <person name="Saunders E."/>
            <person name="Brettin T."/>
            <person name="Bruce D."/>
            <person name="Han C."/>
            <person name="Tapia R."/>
            <person name="Gilna P."/>
            <person name="Schmutz J."/>
            <person name="Larimer F."/>
            <person name="Land M."/>
            <person name="Hauser L."/>
            <person name="Kyrpides N."/>
            <person name="Mikhailova N."/>
            <person name="Viollier P."/>
            <person name="Stephens C."/>
            <person name="Richardson P."/>
        </authorList>
    </citation>
    <scope>NUCLEOTIDE SEQUENCE [LARGE SCALE GENOMIC DNA]</scope>
    <source>
        <strain>MCS10</strain>
    </source>
</reference>
<gene>
    <name evidence="1" type="primary">def</name>
    <name type="ordered locus">Mmar10_0442</name>
</gene>